<feature type="chain" id="PRO_0000134734" description="6,7-dimethyl-8-ribityllumazine synthase">
    <location>
        <begin position="1"/>
        <end position="159"/>
    </location>
</feature>
<feature type="active site" description="Proton donor" evidence="1">
    <location>
        <position position="90"/>
    </location>
</feature>
<feature type="binding site" evidence="1">
    <location>
        <position position="23"/>
    </location>
    <ligand>
        <name>5-amino-6-(D-ribitylamino)uracil</name>
        <dbReference type="ChEBI" id="CHEBI:15934"/>
    </ligand>
</feature>
<feature type="binding site" evidence="1">
    <location>
        <begin position="58"/>
        <end position="60"/>
    </location>
    <ligand>
        <name>5-amino-6-(D-ribitylamino)uracil</name>
        <dbReference type="ChEBI" id="CHEBI:15934"/>
    </ligand>
</feature>
<feature type="binding site" evidence="1">
    <location>
        <begin position="82"/>
        <end position="84"/>
    </location>
    <ligand>
        <name>5-amino-6-(D-ribitylamino)uracil</name>
        <dbReference type="ChEBI" id="CHEBI:15934"/>
    </ligand>
</feature>
<feature type="binding site" evidence="1">
    <location>
        <position position="115"/>
    </location>
    <ligand>
        <name>5-amino-6-(D-ribitylamino)uracil</name>
        <dbReference type="ChEBI" id="CHEBI:15934"/>
    </ligand>
</feature>
<feature type="binding site" evidence="1">
    <location>
        <position position="129"/>
    </location>
    <ligand>
        <name>(2S)-2-hydroxy-3-oxobutyl phosphate</name>
        <dbReference type="ChEBI" id="CHEBI:58830"/>
    </ligand>
</feature>
<name>RISB_BLOFL</name>
<reference key="1">
    <citation type="journal article" date="2003" name="Proc. Natl. Acad. Sci. U.S.A.">
        <title>The genome sequence of Blochmannia floridanus: comparative analysis of reduced genomes.</title>
        <authorList>
            <person name="Gil R."/>
            <person name="Silva F.J."/>
            <person name="Zientz E."/>
            <person name="Delmotte F."/>
            <person name="Gonzalez-Candelas F."/>
            <person name="Latorre A."/>
            <person name="Rausell C."/>
            <person name="Kamerbeek J."/>
            <person name="Gadau J."/>
            <person name="Hoelldobler B."/>
            <person name="van Ham R.C.H.J."/>
            <person name="Gross R."/>
            <person name="Moya A."/>
        </authorList>
    </citation>
    <scope>NUCLEOTIDE SEQUENCE [LARGE SCALE GENOMIC DNA]</scope>
</reference>
<gene>
    <name evidence="1" type="primary">ribH</name>
    <name type="ordered locus">Bfl235</name>
</gene>
<protein>
    <recommendedName>
        <fullName evidence="1">6,7-dimethyl-8-ribityllumazine synthase</fullName>
        <shortName evidence="1">DMRL synthase</shortName>
        <shortName evidence="1">LS</shortName>
        <shortName evidence="1">Lumazine synthase</shortName>
        <ecNumber evidence="1">2.5.1.78</ecNumber>
    </recommendedName>
</protein>
<keyword id="KW-1185">Reference proteome</keyword>
<keyword id="KW-0686">Riboflavin biosynthesis</keyword>
<keyword id="KW-0808">Transferase</keyword>
<organism>
    <name type="scientific">Blochmanniella floridana</name>
    <dbReference type="NCBI Taxonomy" id="203907"/>
    <lineage>
        <taxon>Bacteria</taxon>
        <taxon>Pseudomonadati</taxon>
        <taxon>Pseudomonadota</taxon>
        <taxon>Gammaproteobacteria</taxon>
        <taxon>Enterobacterales</taxon>
        <taxon>Enterobacteriaceae</taxon>
        <taxon>ant endosymbionts</taxon>
        <taxon>Candidatus Blochmanniella</taxon>
    </lineage>
</organism>
<sequence length="159" mass="17214">MDVIEGNTVVSNITKIVVVVARFNKAINNHLLEGTIDTLKRVGQVQDENITIVWVPGAYELPLVSQALSISNKYDAIIVLGTIIRGITEHFEFIYKSCNFGLSNISISNLVPIGLGLLVTNDIGQAVERIGIKGNNKGSEAALAALEMINILKTIKNNN</sequence>
<proteinExistence type="inferred from homology"/>
<dbReference type="EC" id="2.5.1.78" evidence="1"/>
<dbReference type="EMBL" id="BX248583">
    <property type="protein sequence ID" value="CAD83306.1"/>
    <property type="molecule type" value="Genomic_DNA"/>
</dbReference>
<dbReference type="SMR" id="Q7VRI2"/>
<dbReference type="STRING" id="203907.Bfl235"/>
<dbReference type="KEGG" id="bfl:Bfl235"/>
<dbReference type="eggNOG" id="COG0054">
    <property type="taxonomic scope" value="Bacteria"/>
</dbReference>
<dbReference type="HOGENOM" id="CLU_089358_1_1_6"/>
<dbReference type="OrthoDB" id="9809709at2"/>
<dbReference type="UniPathway" id="UPA00275">
    <property type="reaction ID" value="UER00404"/>
</dbReference>
<dbReference type="Proteomes" id="UP000002192">
    <property type="component" value="Chromosome"/>
</dbReference>
<dbReference type="GO" id="GO:0005829">
    <property type="term" value="C:cytosol"/>
    <property type="evidence" value="ECO:0007669"/>
    <property type="project" value="TreeGrafter"/>
</dbReference>
<dbReference type="GO" id="GO:0009349">
    <property type="term" value="C:riboflavin synthase complex"/>
    <property type="evidence" value="ECO:0007669"/>
    <property type="project" value="InterPro"/>
</dbReference>
<dbReference type="GO" id="GO:0000906">
    <property type="term" value="F:6,7-dimethyl-8-ribityllumazine synthase activity"/>
    <property type="evidence" value="ECO:0007669"/>
    <property type="project" value="UniProtKB-UniRule"/>
</dbReference>
<dbReference type="GO" id="GO:0009231">
    <property type="term" value="P:riboflavin biosynthetic process"/>
    <property type="evidence" value="ECO:0007669"/>
    <property type="project" value="UniProtKB-UniRule"/>
</dbReference>
<dbReference type="CDD" id="cd09209">
    <property type="entry name" value="Lumazine_synthase-I"/>
    <property type="match status" value="1"/>
</dbReference>
<dbReference type="Gene3D" id="3.40.50.960">
    <property type="entry name" value="Lumazine/riboflavin synthase"/>
    <property type="match status" value="1"/>
</dbReference>
<dbReference type="HAMAP" id="MF_00178">
    <property type="entry name" value="Lumazine_synth"/>
    <property type="match status" value="1"/>
</dbReference>
<dbReference type="InterPro" id="IPR034964">
    <property type="entry name" value="LS"/>
</dbReference>
<dbReference type="InterPro" id="IPR002180">
    <property type="entry name" value="LS/RS"/>
</dbReference>
<dbReference type="InterPro" id="IPR036467">
    <property type="entry name" value="LS/RS_sf"/>
</dbReference>
<dbReference type="NCBIfam" id="TIGR00114">
    <property type="entry name" value="lumazine-synth"/>
    <property type="match status" value="1"/>
</dbReference>
<dbReference type="NCBIfam" id="NF000812">
    <property type="entry name" value="PRK00061.1-4"/>
    <property type="match status" value="1"/>
</dbReference>
<dbReference type="PANTHER" id="PTHR21058:SF0">
    <property type="entry name" value="6,7-DIMETHYL-8-RIBITYLLUMAZINE SYNTHASE"/>
    <property type="match status" value="1"/>
</dbReference>
<dbReference type="PANTHER" id="PTHR21058">
    <property type="entry name" value="6,7-DIMETHYL-8-RIBITYLLUMAZINE SYNTHASE DMRL SYNTHASE LUMAZINE SYNTHASE"/>
    <property type="match status" value="1"/>
</dbReference>
<dbReference type="Pfam" id="PF00885">
    <property type="entry name" value="DMRL_synthase"/>
    <property type="match status" value="1"/>
</dbReference>
<dbReference type="SUPFAM" id="SSF52121">
    <property type="entry name" value="Lumazine synthase"/>
    <property type="match status" value="1"/>
</dbReference>
<comment type="function">
    <text evidence="1">Catalyzes the formation of 6,7-dimethyl-8-ribityllumazine by condensation of 5-amino-6-(D-ribitylamino)uracil with 3,4-dihydroxy-2-butanone 4-phosphate. This is the penultimate step in the biosynthesis of riboflavin.</text>
</comment>
<comment type="catalytic activity">
    <reaction evidence="1">
        <text>(2S)-2-hydroxy-3-oxobutyl phosphate + 5-amino-6-(D-ribitylamino)uracil = 6,7-dimethyl-8-(1-D-ribityl)lumazine + phosphate + 2 H2O + H(+)</text>
        <dbReference type="Rhea" id="RHEA:26152"/>
        <dbReference type="ChEBI" id="CHEBI:15377"/>
        <dbReference type="ChEBI" id="CHEBI:15378"/>
        <dbReference type="ChEBI" id="CHEBI:15934"/>
        <dbReference type="ChEBI" id="CHEBI:43474"/>
        <dbReference type="ChEBI" id="CHEBI:58201"/>
        <dbReference type="ChEBI" id="CHEBI:58830"/>
        <dbReference type="EC" id="2.5.1.78"/>
    </reaction>
</comment>
<comment type="pathway">
    <text evidence="1">Cofactor biosynthesis; riboflavin biosynthesis; riboflavin from 2-hydroxy-3-oxobutyl phosphate and 5-amino-6-(D-ribitylamino)uracil: step 1/2.</text>
</comment>
<comment type="subunit">
    <text evidence="1">Forms an icosahedral capsid composed of 60 subunits, arranged as a dodecamer of pentamers.</text>
</comment>
<comment type="similarity">
    <text evidence="1">Belongs to the DMRL synthase family.</text>
</comment>
<accession>Q7VRI2</accession>
<evidence type="ECO:0000255" key="1">
    <source>
        <dbReference type="HAMAP-Rule" id="MF_00178"/>
    </source>
</evidence>